<keyword id="KW-0687">Ribonucleoprotein</keyword>
<keyword id="KW-0689">Ribosomal protein</keyword>
<keyword id="KW-0694">RNA-binding</keyword>
<keyword id="KW-0699">rRNA-binding</keyword>
<proteinExistence type="inferred from homology"/>
<feature type="chain" id="PRO_1000143319" description="Small ribosomal subunit protein uS17">
    <location>
        <begin position="1"/>
        <end position="84"/>
    </location>
</feature>
<reference key="1">
    <citation type="journal article" date="2008" name="BMC Microbiol.">
        <title>Complete genome sequence of Treponema pallidum ssp. pallidum strain SS14 determined with oligonucleotide arrays.</title>
        <authorList>
            <person name="Matejkova P."/>
            <person name="Strouhal M."/>
            <person name="Smajs D."/>
            <person name="Norris S.J."/>
            <person name="Palzkill T."/>
            <person name="Petrosino J.F."/>
            <person name="Sodergren E."/>
            <person name="Norton J.E."/>
            <person name="Singh J."/>
            <person name="Richmond T.A."/>
            <person name="Molla M.N."/>
            <person name="Albert T.J."/>
            <person name="Weinstock G.M."/>
        </authorList>
    </citation>
    <scope>NUCLEOTIDE SEQUENCE [LARGE SCALE GENOMIC DNA]</scope>
    <source>
        <strain>SS14</strain>
    </source>
</reference>
<evidence type="ECO:0000255" key="1">
    <source>
        <dbReference type="HAMAP-Rule" id="MF_01345"/>
    </source>
</evidence>
<evidence type="ECO:0000305" key="2"/>
<accession>B2S2E5</accession>
<dbReference type="EMBL" id="CP000805">
    <property type="protein sequence ID" value="ACD70624.1"/>
    <property type="molecule type" value="Genomic_DNA"/>
</dbReference>
<dbReference type="SMR" id="B2S2E5"/>
<dbReference type="KEGG" id="tpp:TPASS_0198"/>
<dbReference type="PATRIC" id="fig|455434.6.peg.201"/>
<dbReference type="Proteomes" id="UP000001202">
    <property type="component" value="Chromosome"/>
</dbReference>
<dbReference type="GO" id="GO:0022627">
    <property type="term" value="C:cytosolic small ribosomal subunit"/>
    <property type="evidence" value="ECO:0007669"/>
    <property type="project" value="TreeGrafter"/>
</dbReference>
<dbReference type="GO" id="GO:0019843">
    <property type="term" value="F:rRNA binding"/>
    <property type="evidence" value="ECO:0007669"/>
    <property type="project" value="UniProtKB-UniRule"/>
</dbReference>
<dbReference type="GO" id="GO:0003735">
    <property type="term" value="F:structural constituent of ribosome"/>
    <property type="evidence" value="ECO:0007669"/>
    <property type="project" value="InterPro"/>
</dbReference>
<dbReference type="GO" id="GO:0006412">
    <property type="term" value="P:translation"/>
    <property type="evidence" value="ECO:0007669"/>
    <property type="project" value="UniProtKB-UniRule"/>
</dbReference>
<dbReference type="CDD" id="cd00364">
    <property type="entry name" value="Ribosomal_uS17"/>
    <property type="match status" value="1"/>
</dbReference>
<dbReference type="Gene3D" id="2.40.50.140">
    <property type="entry name" value="Nucleic acid-binding proteins"/>
    <property type="match status" value="1"/>
</dbReference>
<dbReference type="HAMAP" id="MF_01345_B">
    <property type="entry name" value="Ribosomal_uS17_B"/>
    <property type="match status" value="1"/>
</dbReference>
<dbReference type="InterPro" id="IPR012340">
    <property type="entry name" value="NA-bd_OB-fold"/>
</dbReference>
<dbReference type="InterPro" id="IPR000266">
    <property type="entry name" value="Ribosomal_uS17"/>
</dbReference>
<dbReference type="InterPro" id="IPR019984">
    <property type="entry name" value="Ribosomal_uS17_bact/chlr"/>
</dbReference>
<dbReference type="InterPro" id="IPR019979">
    <property type="entry name" value="Ribosomal_uS17_CS"/>
</dbReference>
<dbReference type="NCBIfam" id="NF004123">
    <property type="entry name" value="PRK05610.1"/>
    <property type="match status" value="1"/>
</dbReference>
<dbReference type="NCBIfam" id="TIGR03635">
    <property type="entry name" value="uS17_bact"/>
    <property type="match status" value="1"/>
</dbReference>
<dbReference type="PANTHER" id="PTHR10744">
    <property type="entry name" value="40S RIBOSOMAL PROTEIN S11 FAMILY MEMBER"/>
    <property type="match status" value="1"/>
</dbReference>
<dbReference type="PANTHER" id="PTHR10744:SF1">
    <property type="entry name" value="SMALL RIBOSOMAL SUBUNIT PROTEIN US17M"/>
    <property type="match status" value="1"/>
</dbReference>
<dbReference type="Pfam" id="PF00366">
    <property type="entry name" value="Ribosomal_S17"/>
    <property type="match status" value="1"/>
</dbReference>
<dbReference type="PRINTS" id="PR00973">
    <property type="entry name" value="RIBOSOMALS17"/>
</dbReference>
<dbReference type="SUPFAM" id="SSF50249">
    <property type="entry name" value="Nucleic acid-binding proteins"/>
    <property type="match status" value="1"/>
</dbReference>
<dbReference type="PROSITE" id="PS00056">
    <property type="entry name" value="RIBOSOMAL_S17"/>
    <property type="match status" value="1"/>
</dbReference>
<sequence>MKRPERRTLVGLVTSDKMHKTVTVRITTKKLHALYKKYVSRSKKYQAHDEENTARAGDVVRIAESRPLSRRKRWRLVEIVERAK</sequence>
<comment type="function">
    <text evidence="1">One of the primary rRNA binding proteins, it binds specifically to the 5'-end of 16S ribosomal RNA.</text>
</comment>
<comment type="subunit">
    <text evidence="1">Part of the 30S ribosomal subunit.</text>
</comment>
<comment type="similarity">
    <text evidence="1">Belongs to the universal ribosomal protein uS17 family.</text>
</comment>
<protein>
    <recommendedName>
        <fullName evidence="1">Small ribosomal subunit protein uS17</fullName>
    </recommendedName>
    <alternativeName>
        <fullName evidence="2">30S ribosomal protein S17</fullName>
    </alternativeName>
</protein>
<name>RS17_TREPS</name>
<gene>
    <name evidence="1" type="primary">rpsQ</name>
    <name type="ordered locus">TPASS_0198</name>
</gene>
<organism>
    <name type="scientific">Treponema pallidum subsp. pallidum (strain SS14)</name>
    <dbReference type="NCBI Taxonomy" id="455434"/>
    <lineage>
        <taxon>Bacteria</taxon>
        <taxon>Pseudomonadati</taxon>
        <taxon>Spirochaetota</taxon>
        <taxon>Spirochaetia</taxon>
        <taxon>Spirochaetales</taxon>
        <taxon>Treponemataceae</taxon>
        <taxon>Treponema</taxon>
    </lineage>
</organism>